<protein>
    <recommendedName>
        <fullName evidence="1">Glycerol-3-phosphate acyltransferase</fullName>
    </recommendedName>
    <alternativeName>
        <fullName evidence="1">Acyl-PO4 G3P acyltransferase</fullName>
    </alternativeName>
    <alternativeName>
        <fullName evidence="1">Acyl-phosphate--glycerol-3-phosphate acyltransferase</fullName>
    </alternativeName>
    <alternativeName>
        <fullName evidence="1">G3P acyltransferase</fullName>
        <shortName evidence="1">GPAT</shortName>
        <ecNumber evidence="1">2.3.1.275</ecNumber>
    </alternativeName>
    <alternativeName>
        <fullName evidence="1">Lysophosphatidic acid synthase</fullName>
        <shortName evidence="1">LPA synthase</shortName>
    </alternativeName>
</protein>
<gene>
    <name evidence="1" type="primary">plsY</name>
    <name type="ordered locus">UUR10_0448</name>
</gene>
<proteinExistence type="inferred from homology"/>
<dbReference type="EC" id="2.3.1.275" evidence="1"/>
<dbReference type="EMBL" id="CP001184">
    <property type="protein sequence ID" value="ACI60138.1"/>
    <property type="molecule type" value="Genomic_DNA"/>
</dbReference>
<dbReference type="RefSeq" id="WP_004026031.1">
    <property type="nucleotide sequence ID" value="NC_011374.1"/>
</dbReference>
<dbReference type="SMR" id="B5ZBQ1"/>
<dbReference type="STRING" id="565575.UUR10_0448"/>
<dbReference type="GeneID" id="93848920"/>
<dbReference type="KEGG" id="uue:UUR10_0448"/>
<dbReference type="eggNOG" id="COG0344">
    <property type="taxonomic scope" value="Bacteria"/>
</dbReference>
<dbReference type="HOGENOM" id="CLU_081254_3_0_14"/>
<dbReference type="OrthoDB" id="9777124at2"/>
<dbReference type="UniPathway" id="UPA00085"/>
<dbReference type="Proteomes" id="UP000002018">
    <property type="component" value="Chromosome"/>
</dbReference>
<dbReference type="GO" id="GO:0005886">
    <property type="term" value="C:plasma membrane"/>
    <property type="evidence" value="ECO:0007669"/>
    <property type="project" value="UniProtKB-SubCell"/>
</dbReference>
<dbReference type="GO" id="GO:0043772">
    <property type="term" value="F:acyl-phosphate glycerol-3-phosphate acyltransferase activity"/>
    <property type="evidence" value="ECO:0007669"/>
    <property type="project" value="UniProtKB-UniRule"/>
</dbReference>
<dbReference type="GO" id="GO:0008654">
    <property type="term" value="P:phospholipid biosynthetic process"/>
    <property type="evidence" value="ECO:0007669"/>
    <property type="project" value="UniProtKB-UniRule"/>
</dbReference>
<dbReference type="HAMAP" id="MF_01043">
    <property type="entry name" value="PlsY"/>
    <property type="match status" value="1"/>
</dbReference>
<dbReference type="InterPro" id="IPR003811">
    <property type="entry name" value="G3P_acylTferase_PlsY"/>
</dbReference>
<dbReference type="NCBIfam" id="TIGR00023">
    <property type="entry name" value="glycerol-3-phosphate 1-O-acyltransferase PlsY"/>
    <property type="match status" value="1"/>
</dbReference>
<dbReference type="PANTHER" id="PTHR30309:SF0">
    <property type="entry name" value="GLYCEROL-3-PHOSPHATE ACYLTRANSFERASE-RELATED"/>
    <property type="match status" value="1"/>
</dbReference>
<dbReference type="PANTHER" id="PTHR30309">
    <property type="entry name" value="INNER MEMBRANE PROTEIN YGIH"/>
    <property type="match status" value="1"/>
</dbReference>
<dbReference type="Pfam" id="PF02660">
    <property type="entry name" value="G3P_acyltransf"/>
    <property type="match status" value="1"/>
</dbReference>
<dbReference type="SMART" id="SM01207">
    <property type="entry name" value="G3P_acyltransf"/>
    <property type="match status" value="1"/>
</dbReference>
<reference key="1">
    <citation type="submission" date="2008-10" db="EMBL/GenBank/DDBJ databases">
        <title>Genome sequence of Ureaplasma urealyticum serovar 10 ATCC-33699.</title>
        <authorList>
            <person name="Shrivastava S."/>
            <person name="Methe B.A."/>
            <person name="Glass J."/>
            <person name="White K."/>
            <person name="Duffy L.B."/>
        </authorList>
    </citation>
    <scope>NUCLEOTIDE SEQUENCE [LARGE SCALE GENOMIC DNA]</scope>
    <source>
        <strain>ATCC 33699 / Western</strain>
    </source>
</reference>
<keyword id="KW-1003">Cell membrane</keyword>
<keyword id="KW-0444">Lipid biosynthesis</keyword>
<keyword id="KW-0443">Lipid metabolism</keyword>
<keyword id="KW-0472">Membrane</keyword>
<keyword id="KW-0594">Phospholipid biosynthesis</keyword>
<keyword id="KW-1208">Phospholipid metabolism</keyword>
<keyword id="KW-0808">Transferase</keyword>
<keyword id="KW-0812">Transmembrane</keyword>
<keyword id="KW-1133">Transmembrane helix</keyword>
<sequence>MDQVYSVAMAYILTLIISPLYSYLIGSLNASIILSLLLKKQDIRHFASKNAGMTNMTRVYGKKLGILTLFLDIVKPIITISLTYIIYKYALNAPFVLSNGFNQAILVYFGGIFTIIGHCYPIFFKFQGGKGVASYGGFLITIDPIVAVIGIITLLIILLITKYMSLSAMITATITCFLVLIPGINYIPYYNEHFVEYLFDLNHVIKGTWYVWLFLLISASILIYRHKTNILSIATKQERKTFLFQPKPKNNI</sequence>
<comment type="function">
    <text evidence="1">Catalyzes the transfer of an acyl group from acyl-phosphate (acyl-PO(4)) to glycerol-3-phosphate (G3P) to form lysophosphatidic acid (LPA). This enzyme utilizes acyl-phosphate as fatty acyl donor, but not acyl-CoA or acyl-ACP.</text>
</comment>
<comment type="catalytic activity">
    <reaction evidence="1">
        <text>an acyl phosphate + sn-glycerol 3-phosphate = a 1-acyl-sn-glycero-3-phosphate + phosphate</text>
        <dbReference type="Rhea" id="RHEA:34075"/>
        <dbReference type="ChEBI" id="CHEBI:43474"/>
        <dbReference type="ChEBI" id="CHEBI:57597"/>
        <dbReference type="ChEBI" id="CHEBI:57970"/>
        <dbReference type="ChEBI" id="CHEBI:59918"/>
        <dbReference type="EC" id="2.3.1.275"/>
    </reaction>
</comment>
<comment type="pathway">
    <text evidence="1">Lipid metabolism; phospholipid metabolism.</text>
</comment>
<comment type="subunit">
    <text evidence="1">Probably interacts with PlsX.</text>
</comment>
<comment type="subcellular location">
    <subcellularLocation>
        <location evidence="1">Cell membrane</location>
        <topology evidence="1">Multi-pass membrane protein</topology>
    </subcellularLocation>
</comment>
<comment type="similarity">
    <text evidence="1">Belongs to the PlsY family.</text>
</comment>
<evidence type="ECO:0000255" key="1">
    <source>
        <dbReference type="HAMAP-Rule" id="MF_01043"/>
    </source>
</evidence>
<accession>B5ZBQ1</accession>
<name>PLSY_UREU1</name>
<feature type="chain" id="PRO_1000136131" description="Glycerol-3-phosphate acyltransferase">
    <location>
        <begin position="1"/>
        <end position="252"/>
    </location>
</feature>
<feature type="transmembrane region" description="Helical" evidence="1">
    <location>
        <begin position="6"/>
        <end position="26"/>
    </location>
</feature>
<feature type="transmembrane region" description="Helical" evidence="1">
    <location>
        <begin position="66"/>
        <end position="86"/>
    </location>
</feature>
<feature type="transmembrane region" description="Helical" evidence="1">
    <location>
        <begin position="104"/>
        <end position="124"/>
    </location>
</feature>
<feature type="transmembrane region" description="Helical" evidence="1">
    <location>
        <begin position="140"/>
        <end position="160"/>
    </location>
</feature>
<feature type="transmembrane region" description="Helical" evidence="1">
    <location>
        <begin position="164"/>
        <end position="184"/>
    </location>
</feature>
<feature type="transmembrane region" description="Helical" evidence="1">
    <location>
        <begin position="204"/>
        <end position="224"/>
    </location>
</feature>
<organism>
    <name type="scientific">Ureaplasma urealyticum serovar 10 (strain ATCC 33699 / Western)</name>
    <dbReference type="NCBI Taxonomy" id="565575"/>
    <lineage>
        <taxon>Bacteria</taxon>
        <taxon>Bacillati</taxon>
        <taxon>Mycoplasmatota</taxon>
        <taxon>Mycoplasmoidales</taxon>
        <taxon>Mycoplasmoidaceae</taxon>
        <taxon>Ureaplasma</taxon>
    </lineage>
</organism>